<keyword id="KW-0122">Cardiomyopathy</keyword>
<keyword id="KW-0217">Developmental protein</keyword>
<keyword id="KW-0225">Disease variant</keyword>
<keyword id="KW-1015">Disulfide bond</keyword>
<keyword id="KW-0393">Immunoglobulin domain</keyword>
<keyword id="KW-0418">Kinase</keyword>
<keyword id="KW-0539">Nucleus</keyword>
<keyword id="KW-0597">Phosphoprotein</keyword>
<keyword id="KW-1267">Proteomics identification</keyword>
<keyword id="KW-1185">Reference proteome</keyword>
<keyword id="KW-0677">Repeat</keyword>
<keyword id="KW-0723">Serine/threonine-protein kinase</keyword>
<keyword id="KW-0808">Transferase</keyword>
<accession>Q96L96</accession>
<accession>Q9P2L6</accession>
<reference key="1">
    <citation type="journal article" date="1999" name="Curr. Biol.">
        <title>Alpha-kinases: a new class of protein kinases with a novel catalytic domain.</title>
        <authorList>
            <person name="Ryazanov A.G."/>
            <person name="Pavur K.S."/>
            <person name="Dorovkov M.V."/>
        </authorList>
    </citation>
    <scope>NUCLEOTIDE SEQUENCE [MRNA]</scope>
    <scope>VARIANT LEU-1097</scope>
</reference>
<reference key="2">
    <citation type="journal article" date="2000" name="DNA Res.">
        <title>Prediction of the coding sequences of unidentified human genes. XVI. The complete sequences of 150 new cDNA clones from brain which code for large proteins in vitro.</title>
        <authorList>
            <person name="Nagase T."/>
            <person name="Kikuno R."/>
            <person name="Ishikawa K."/>
            <person name="Hirosawa M."/>
            <person name="Ohara O."/>
        </authorList>
    </citation>
    <scope>NUCLEOTIDE SEQUENCE [LARGE SCALE MRNA] OF 761-1705</scope>
    <scope>VARIANT LEU-1097</scope>
    <source>
        <tissue>Brain</tissue>
    </source>
</reference>
<reference key="3">
    <citation type="journal article" date="2006" name="Nature">
        <title>Analysis of the DNA sequence and duplication history of human chromosome 15.</title>
        <authorList>
            <person name="Zody M.C."/>
            <person name="Garber M."/>
            <person name="Sharpe T."/>
            <person name="Young S.K."/>
            <person name="Rowen L."/>
            <person name="O'Neill K."/>
            <person name="Whittaker C.A."/>
            <person name="Kamal M."/>
            <person name="Chang J.L."/>
            <person name="Cuomo C.A."/>
            <person name="Dewar K."/>
            <person name="FitzGerald M.G."/>
            <person name="Kodira C.D."/>
            <person name="Madan A."/>
            <person name="Qin S."/>
            <person name="Yang X."/>
            <person name="Abbasi N."/>
            <person name="Abouelleil A."/>
            <person name="Arachchi H.M."/>
            <person name="Baradarani L."/>
            <person name="Birditt B."/>
            <person name="Bloom S."/>
            <person name="Bloom T."/>
            <person name="Borowsky M.L."/>
            <person name="Burke J."/>
            <person name="Butler J."/>
            <person name="Cook A."/>
            <person name="DeArellano K."/>
            <person name="DeCaprio D."/>
            <person name="Dorris L. III"/>
            <person name="Dors M."/>
            <person name="Eichler E.E."/>
            <person name="Engels R."/>
            <person name="Fahey J."/>
            <person name="Fleetwood P."/>
            <person name="Friedman C."/>
            <person name="Gearin G."/>
            <person name="Hall J.L."/>
            <person name="Hensley G."/>
            <person name="Johnson E."/>
            <person name="Jones C."/>
            <person name="Kamat A."/>
            <person name="Kaur A."/>
            <person name="Locke D.P."/>
            <person name="Madan A."/>
            <person name="Munson G."/>
            <person name="Jaffe D.B."/>
            <person name="Lui A."/>
            <person name="Macdonald P."/>
            <person name="Mauceli E."/>
            <person name="Naylor J.W."/>
            <person name="Nesbitt R."/>
            <person name="Nicol R."/>
            <person name="O'Leary S.B."/>
            <person name="Ratcliffe A."/>
            <person name="Rounsley S."/>
            <person name="She X."/>
            <person name="Sneddon K.M.B."/>
            <person name="Stewart S."/>
            <person name="Sougnez C."/>
            <person name="Stone S.M."/>
            <person name="Topham K."/>
            <person name="Vincent D."/>
            <person name="Wang S."/>
            <person name="Zimmer A.R."/>
            <person name="Birren B.W."/>
            <person name="Hood L."/>
            <person name="Lander E.S."/>
            <person name="Nusbaum C."/>
        </authorList>
    </citation>
    <scope>NUCLEOTIDE SEQUENCE [LARGE SCALE GENOMIC DNA]</scope>
</reference>
<reference key="4">
    <citation type="journal article" date="2016" name="Eur. Heart J.">
        <title>ALPK3-deficient cardiomyocytes generated from patient-derived induced pluripotent stem cells and mutant human embryonic stem cells display abnormal calcium handling and establish that ALPK3 deficiency underlies familial cardiomyopathy.</title>
        <authorList>
            <person name="Phelan D.G."/>
            <person name="Anderson D.J."/>
            <person name="Howden S.E."/>
            <person name="Wong R.C."/>
            <person name="Hickey P.F."/>
            <person name="Pope K."/>
            <person name="Wilson G.R."/>
            <person name="Pebay A."/>
            <person name="Davis A.M."/>
            <person name="Petrou S."/>
            <person name="Elefanty A.G."/>
            <person name="Stanley E.G."/>
            <person name="James P.A."/>
            <person name="Macciocca I."/>
            <person name="Bahlo M."/>
            <person name="Cheung M.M."/>
            <person name="Amor D.J."/>
            <person name="Elliott D.A."/>
            <person name="Lockhart P.J."/>
        </authorList>
    </citation>
    <scope>INVOLVEMENT IN CMH27</scope>
    <scope>VARIANT CMH27 1062-TRP--ARG-1705 DEL</scope>
</reference>
<reference key="5">
    <citation type="journal article" date="2016" name="J. Am. Coll. Cardiol.">
        <title>Biallelic truncating mutations in ALPK3 cause severe pediatric cardiomyopathy.</title>
        <authorList>
            <person name="Almomani R."/>
            <person name="Verhagen J.M."/>
            <person name="Herkert J.C."/>
            <person name="Brosens E."/>
            <person name="van Spaendonck-Zwarts K.Y."/>
            <person name="Asimaki A."/>
            <person name="van der Zwaag P.A."/>
            <person name="Frohn-Mulder I.M."/>
            <person name="Bertoli-Avella A.M."/>
            <person name="Boven L.G."/>
            <person name="van Slegtenhorst M.A."/>
            <person name="van der Smagt J.J."/>
            <person name="van Ijcken W.F."/>
            <person name="Timmer B."/>
            <person name="van Stuijvenberg M."/>
            <person name="Verdijk R.M."/>
            <person name="Saffitz J.E."/>
            <person name="du Plessis F.A."/>
            <person name="Michels M."/>
            <person name="Hofstra R.M."/>
            <person name="Sinke R.J."/>
            <person name="van Tintelen J.P."/>
            <person name="Wessels M.W."/>
            <person name="Jongbloed J.D."/>
            <person name="van de Laar I.M."/>
        </authorList>
    </citation>
    <scope>INVOLVEMENT IN CMH27</scope>
    <scope>VARIANTS CMH27 1059-ARG--ARG-1705 DEL AND 1563-TRP--ARG-1705 DEL</scope>
</reference>
<reference key="6">
    <citation type="journal article" date="2017" name="Cold Spring Harb. Mol. Case Stud.">
        <title>ALPK3 gene mutation in a patient with congenital cardiomyopathy and dysmorphic features.</title>
        <authorList>
            <person name="Caglayan A.O."/>
            <person name="Sezer R.G."/>
            <person name="Kaymakcalan H."/>
            <person name="Ulgen E."/>
            <person name="Yavuz T."/>
            <person name="Baranoski J.F."/>
            <person name="Bozaykut A."/>
            <person name="Harmanci A.S."/>
            <person name="Yalcin Y."/>
            <person name="Youngblood M.W."/>
            <person name="Yasuno K."/>
            <person name="Bilguevar K."/>
            <person name="Gunel M."/>
        </authorList>
    </citation>
    <scope>INVOLVEMENT IN CMH27</scope>
</reference>
<reference key="7">
    <citation type="journal article" date="2007" name="Nature">
        <title>Patterns of somatic mutation in human cancer genomes.</title>
        <authorList>
            <person name="Greenman C."/>
            <person name="Stephens P."/>
            <person name="Smith R."/>
            <person name="Dalgliesh G.L."/>
            <person name="Hunter C."/>
            <person name="Bignell G."/>
            <person name="Davies H."/>
            <person name="Teague J."/>
            <person name="Butler A."/>
            <person name="Stevens C."/>
            <person name="Edkins S."/>
            <person name="O'Meara S."/>
            <person name="Vastrik I."/>
            <person name="Schmidt E.E."/>
            <person name="Avis T."/>
            <person name="Barthorpe S."/>
            <person name="Bhamra G."/>
            <person name="Buck G."/>
            <person name="Choudhury B."/>
            <person name="Clements J."/>
            <person name="Cole J."/>
            <person name="Dicks E."/>
            <person name="Forbes S."/>
            <person name="Gray K."/>
            <person name="Halliday K."/>
            <person name="Harrison R."/>
            <person name="Hills K."/>
            <person name="Hinton J."/>
            <person name="Jenkinson A."/>
            <person name="Jones D."/>
            <person name="Menzies A."/>
            <person name="Mironenko T."/>
            <person name="Perry J."/>
            <person name="Raine K."/>
            <person name="Richardson D."/>
            <person name="Shepherd R."/>
            <person name="Small A."/>
            <person name="Tofts C."/>
            <person name="Varian J."/>
            <person name="Webb T."/>
            <person name="West S."/>
            <person name="Widaa S."/>
            <person name="Yates A."/>
            <person name="Cahill D.P."/>
            <person name="Louis D.N."/>
            <person name="Goldstraw P."/>
            <person name="Nicholson A.G."/>
            <person name="Brasseur F."/>
            <person name="Looijenga L."/>
            <person name="Weber B.L."/>
            <person name="Chiew Y.-E."/>
            <person name="DeFazio A."/>
            <person name="Greaves M.F."/>
            <person name="Green A.R."/>
            <person name="Campbell P."/>
            <person name="Birney E."/>
            <person name="Easton D.F."/>
            <person name="Chenevix-Trench G."/>
            <person name="Tan M.-H."/>
            <person name="Khoo S.K."/>
            <person name="Teh B.T."/>
            <person name="Yuen S.T."/>
            <person name="Leung S.Y."/>
            <person name="Wooster R."/>
            <person name="Futreal P.A."/>
            <person name="Stratton M.R."/>
        </authorList>
    </citation>
    <scope>VARIANTS [LARGE SCALE ANALYSIS] HIS-134; ILE-136; SER-212; GLU-231; GLU-377; ARG-400; ASP-461; MET-559; LEU-634; ASP-727; LEU-1097; GLU-1162; TRP-1210; ASP-1355 AND PRO-1420</scope>
</reference>
<reference key="8">
    <citation type="journal article" date="2018" name="J. Hum. Genet.">
        <title>Novel ALPK3 mutation in a Tunisian patient with pediatric cardiomyopathy and facio-thoraco-skeletal features.</title>
        <authorList>
            <person name="Jaouadi H."/>
            <person name="Kraoua L."/>
            <person name="Chaker L."/>
            <person name="Atkinson A."/>
            <person name="Delague V."/>
            <person name="Levy N."/>
            <person name="Benkhalifa R."/>
            <person name="Mrad R."/>
            <person name="Abdelhak S."/>
            <person name="Zaffran S."/>
        </authorList>
    </citation>
    <scope>INVOLVEMENT IN CMH27</scope>
</reference>
<proteinExistence type="evidence at protein level"/>
<sequence length="1705" mass="180672">MGSRRAPSRGWGAGGRSGAGGDGEDDGPVWIPSPASRSYLLSVRPETSLSSNRLSHPSSGRSTFCSIIAQLTEETQPLFETTLKSRSVSEDSDVRFTCIVTGYPEPEVTWYKDDTELDRYCGLPKYEITHQGNRHTLQLYRCREEDAAIYQASAQNSKGIVSCSGVLEVGTMTEYKIHQRWFAKLKRKAAAKLREIEQSWKHEKAVPGEVDTLRKLSPDRFQRKRRLSGAQAPGPSVPTREPEGGTLAAWQEGETETAQHSGLGLINSFASGEVTTNGEAAPENGEDGEHGLLTYICDAMELGPQRALKEESGAKKKKKDEESKQGLRKPELEKAAQSRRSSENCIPSSDEPDSCGTQGPVGVEQVQTQPRGRAARGPGSSGTDSTRKPASAVGTPDKAQKAPGPGPGQEVYFSLKDMYLENTQAVRPLGEEGPQTLSVRAPGESPKGKAPLRARSEGVPGAPGQPTHSLTPQPTRPFNRKRFAPPKPKGEATTDSKPISSLSQAPECGAQSLGKAPPQASVQVPTPPARRRHGTRDSTLQGQAGHRTPGEVLECQTTTAPTMSASSSSDVASIGVSTSGSQGIIEPMDMETQEDGRTSANQRTGSKKNVQADGKIQVDGRTRGDGTQTAQRTRADRKTQVDAGTQESKRPQSDRSAQKGMMTQGRAETQLETTQAGEKIQEDRKAQADKGTQEDRRMQGEKGMQGEKGTQSEGSAPTAMEGQSEQEVATSLGPPSRTPKLPPTAGPRAPLNIECFVQTPEGSCFPKKPGCLPRSEEAVVTASRNHEQTVLGPLSGNLMLPAQPPHEGSVEQVGGERCRGPQSSGPVEAKQEDSPFQCPKEERPGGVPCMDQGGCPLAGLSQEVPTMPSLPGTGLTASPKAGPCSTPTSQHGSTATFLPSEDQVLMSSAPTLHLGLGTPTQSHPPETMATSSEGACAQVPDVEGRTPGPRSCDPGLIDSLKNYLLLLLKLSSTETSGAGGESQVGAATGGLVPSATLTPTVEVAGLSPRTSRRILERVENNHLVQSAQTLLLSPCTSRRLTGLLDREVQAGRQALAAARGSWGPGPSSLTVPAIVVDEEDPGLASEGASEGEGEVSPEGPGLLGASQESSMAGRLGEAGGQAAPGQGPSAESIAQEPSQEEKFPGEALTGLPAATPEELALGARRKRFLPKVRAAGDGEATTPEERESPTVSPRGPRKSLVPGSPGTPGRERRSPTQGRKASMLEVPRAEEELAAGDLGPSPKAGGLDTEVALDEGKQETLAKPRKAKDLLKAPQVIRKIRVEQFPDASGSLKLWCQFFNILSDSVLTWAKDQRPVGEVGRSAGDEGPAALAIVQASPVDCGVYRCTIHNEHGSASTDFCLSPEVLSGFISREEGEVGEEIEMTPMVFAKGLADSGCWGDKLFGRLVSEELRGGGYGCGLRKASQAKVIYGLEPIFESGRTCIIKVSSLLVFGPSSETSLVGRNYDVTIQGCKIQNMSREYCKIFAAEARAAPGFGEVPEIIPLYLIYRPANNIPYATLEEDLGKPLESYCSREWGCAEAPTASGSSEAMQKCQTFQHWLYQWTNGSFLVTDLAGVDWKMTDVQIATKLRGYQGLKESCFPALLDRFASSHQCNAYCELLGLTPLKGPEAAHPQAKAKGSKSPSAGRKGSQLSPQPQKKGLPSPQGTRKSAPSSKATPQASEPVTTQLLGQPPTQEEGSKAQGMR</sequence>
<evidence type="ECO:0000250" key="1">
    <source>
        <dbReference type="UniProtKB" id="Q924C5"/>
    </source>
</evidence>
<evidence type="ECO:0000250" key="2">
    <source>
        <dbReference type="UniProtKB" id="Q96QP1"/>
    </source>
</evidence>
<evidence type="ECO:0000255" key="3">
    <source>
        <dbReference type="PROSITE-ProRule" id="PRU00114"/>
    </source>
</evidence>
<evidence type="ECO:0000255" key="4">
    <source>
        <dbReference type="PROSITE-ProRule" id="PRU00501"/>
    </source>
</evidence>
<evidence type="ECO:0000256" key="5">
    <source>
        <dbReference type="SAM" id="MobiDB-lite"/>
    </source>
</evidence>
<evidence type="ECO:0000269" key="6">
    <source>
    </source>
</evidence>
<evidence type="ECO:0000269" key="7">
    <source>
    </source>
</evidence>
<evidence type="ECO:0000269" key="8">
    <source>
    </source>
</evidence>
<evidence type="ECO:0000269" key="9">
    <source>
    </source>
</evidence>
<evidence type="ECO:0000269" key="10">
    <source>
    </source>
</evidence>
<evidence type="ECO:0000269" key="11">
    <source>
    </source>
</evidence>
<evidence type="ECO:0000269" key="12">
    <source>
    </source>
</evidence>
<evidence type="ECO:0000303" key="13">
    <source>
    </source>
</evidence>
<evidence type="ECO:0000303" key="14">
    <source>
    </source>
</evidence>
<evidence type="ECO:0000305" key="15"/>
<evidence type="ECO:0000305" key="16">
    <source>
    </source>
</evidence>
<evidence type="ECO:0000305" key="17">
    <source>
    </source>
</evidence>
<evidence type="ECO:0000305" key="18">
    <source>
    </source>
</evidence>
<evidence type="ECO:0000305" key="19">
    <source>
    </source>
</evidence>
<evidence type="ECO:0000312" key="20">
    <source>
        <dbReference type="HGNC" id="HGNC:17574"/>
    </source>
</evidence>
<name>ALPK3_HUMAN</name>
<dbReference type="EC" id="2.7.11.1" evidence="2"/>
<dbReference type="EMBL" id="AY044449">
    <property type="protein sequence ID" value="AAK95951.1"/>
    <property type="status" value="ALT_INIT"/>
    <property type="molecule type" value="mRNA"/>
</dbReference>
<dbReference type="EMBL" id="AB037751">
    <property type="protein sequence ID" value="BAA92568.1"/>
    <property type="molecule type" value="mRNA"/>
</dbReference>
<dbReference type="EMBL" id="AC012291">
    <property type="status" value="NOT_ANNOTATED_CDS"/>
    <property type="molecule type" value="Genomic_DNA"/>
</dbReference>
<dbReference type="CCDS" id="CCDS10333.2"/>
<dbReference type="RefSeq" id="NP_065829.4">
    <property type="nucleotide sequence ID" value="NM_020778.5"/>
</dbReference>
<dbReference type="SMR" id="Q96L96"/>
<dbReference type="BioGRID" id="121597">
    <property type="interactions" value="8"/>
</dbReference>
<dbReference type="FunCoup" id="Q96L96">
    <property type="interactions" value="228"/>
</dbReference>
<dbReference type="IntAct" id="Q96L96">
    <property type="interactions" value="9"/>
</dbReference>
<dbReference type="STRING" id="9606.ENSP00000258888"/>
<dbReference type="GlyGen" id="Q96L96">
    <property type="glycosylation" value="3 sites, 1 O-linked glycan (1 site)"/>
</dbReference>
<dbReference type="iPTMnet" id="Q96L96"/>
<dbReference type="PhosphoSitePlus" id="Q96L96"/>
<dbReference type="BioMuta" id="ALPK3"/>
<dbReference type="DMDM" id="296434393"/>
<dbReference type="jPOST" id="Q96L96"/>
<dbReference type="MassIVE" id="Q96L96"/>
<dbReference type="PaxDb" id="9606-ENSP00000258888"/>
<dbReference type="PeptideAtlas" id="Q96L96"/>
<dbReference type="ProteomicsDB" id="77171"/>
<dbReference type="Pumba" id="Q96L96"/>
<dbReference type="Antibodypedia" id="15507">
    <property type="antibodies" value="47 antibodies from 19 providers"/>
</dbReference>
<dbReference type="DNASU" id="57538"/>
<dbReference type="Ensembl" id="ENST00000258888.6">
    <property type="protein sequence ID" value="ENSP00000258888.6"/>
    <property type="gene ID" value="ENSG00000136383.7"/>
</dbReference>
<dbReference type="GeneID" id="57538"/>
<dbReference type="KEGG" id="hsa:57538"/>
<dbReference type="MANE-Select" id="ENST00000258888.6">
    <property type="protein sequence ID" value="ENSP00000258888.6"/>
    <property type="RefSeq nucleotide sequence ID" value="NM_020778.5"/>
    <property type="RefSeq protein sequence ID" value="NP_065829.4"/>
</dbReference>
<dbReference type="UCSC" id="uc002ble.3">
    <property type="organism name" value="human"/>
</dbReference>
<dbReference type="AGR" id="HGNC:17574"/>
<dbReference type="CTD" id="57538"/>
<dbReference type="DisGeNET" id="57538"/>
<dbReference type="GeneCards" id="ALPK3"/>
<dbReference type="HGNC" id="HGNC:17574">
    <property type="gene designation" value="ALPK3"/>
</dbReference>
<dbReference type="HPA" id="ENSG00000136383">
    <property type="expression patterns" value="Group enriched (heart muscle, skeletal muscle, tongue)"/>
</dbReference>
<dbReference type="MalaCards" id="ALPK3"/>
<dbReference type="MIM" id="617608">
    <property type="type" value="gene"/>
</dbReference>
<dbReference type="MIM" id="618052">
    <property type="type" value="phenotype"/>
</dbReference>
<dbReference type="neXtProt" id="NX_Q96L96"/>
<dbReference type="OpenTargets" id="ENSG00000136383"/>
<dbReference type="PharmGKB" id="PA134921552"/>
<dbReference type="VEuPathDB" id="HostDB:ENSG00000136383"/>
<dbReference type="eggNOG" id="ENOG502QPP5">
    <property type="taxonomic scope" value="Eukaryota"/>
</dbReference>
<dbReference type="GeneTree" id="ENSGT00940000158534"/>
<dbReference type="HOGENOM" id="CLU_003270_1_0_1"/>
<dbReference type="InParanoid" id="Q96L96"/>
<dbReference type="OMA" id="WPPAINR"/>
<dbReference type="OrthoDB" id="301415at2759"/>
<dbReference type="PAN-GO" id="Q96L96">
    <property type="GO annotations" value="2 GO annotations based on evolutionary models"/>
</dbReference>
<dbReference type="PhylomeDB" id="Q96L96"/>
<dbReference type="TreeFam" id="TF332629"/>
<dbReference type="PathwayCommons" id="Q96L96"/>
<dbReference type="SignaLink" id="Q96L96"/>
<dbReference type="BioGRID-ORCS" id="57538">
    <property type="hits" value="13 hits in 1154 CRISPR screens"/>
</dbReference>
<dbReference type="ChiTaRS" id="ALPK3">
    <property type="organism name" value="human"/>
</dbReference>
<dbReference type="GenomeRNAi" id="57538"/>
<dbReference type="Pharos" id="Q96L96">
    <property type="development level" value="Tdark"/>
</dbReference>
<dbReference type="PRO" id="PR:Q96L96"/>
<dbReference type="Proteomes" id="UP000005640">
    <property type="component" value="Chromosome 15"/>
</dbReference>
<dbReference type="RNAct" id="Q96L96">
    <property type="molecule type" value="protein"/>
</dbReference>
<dbReference type="Bgee" id="ENSG00000136383">
    <property type="expression patterns" value="Expressed in gastrocnemius and 132 other cell types or tissues"/>
</dbReference>
<dbReference type="GO" id="GO:0005634">
    <property type="term" value="C:nucleus"/>
    <property type="evidence" value="ECO:0000250"/>
    <property type="project" value="HGNC-UCL"/>
</dbReference>
<dbReference type="GO" id="GO:0005524">
    <property type="term" value="F:ATP binding"/>
    <property type="evidence" value="ECO:0007669"/>
    <property type="project" value="InterPro"/>
</dbReference>
<dbReference type="GO" id="GO:0106310">
    <property type="term" value="F:protein serine kinase activity"/>
    <property type="evidence" value="ECO:0007669"/>
    <property type="project" value="RHEA"/>
</dbReference>
<dbReference type="GO" id="GO:0004674">
    <property type="term" value="F:protein serine/threonine kinase activity"/>
    <property type="evidence" value="ECO:0007669"/>
    <property type="project" value="UniProtKB-KW"/>
</dbReference>
<dbReference type="GO" id="GO:0055013">
    <property type="term" value="P:cardiac muscle cell development"/>
    <property type="evidence" value="ECO:0000318"/>
    <property type="project" value="GO_Central"/>
</dbReference>
<dbReference type="GO" id="GO:0007507">
    <property type="term" value="P:heart development"/>
    <property type="evidence" value="ECO:0000250"/>
    <property type="project" value="HGNC-UCL"/>
</dbReference>
<dbReference type="FunFam" id="2.60.40.10:FF:000069">
    <property type="entry name" value="Alpha-protein kinase 3"/>
    <property type="match status" value="1"/>
</dbReference>
<dbReference type="FunFam" id="2.60.40.10:FF:000543">
    <property type="entry name" value="Alpha-protein kinase 3"/>
    <property type="match status" value="1"/>
</dbReference>
<dbReference type="FunFam" id="3.20.200.10:FF:000003">
    <property type="entry name" value="alpha-protein kinase 3"/>
    <property type="match status" value="1"/>
</dbReference>
<dbReference type="Gene3D" id="2.60.40.10">
    <property type="entry name" value="Immunoglobulins"/>
    <property type="match status" value="2"/>
</dbReference>
<dbReference type="Gene3D" id="3.20.200.10">
    <property type="entry name" value="MHCK/EF2 kinase"/>
    <property type="match status" value="1"/>
</dbReference>
<dbReference type="InterPro" id="IPR004166">
    <property type="entry name" value="a-kinase_dom"/>
</dbReference>
<dbReference type="InterPro" id="IPR007110">
    <property type="entry name" value="Ig-like_dom"/>
</dbReference>
<dbReference type="InterPro" id="IPR036179">
    <property type="entry name" value="Ig-like_dom_sf"/>
</dbReference>
<dbReference type="InterPro" id="IPR013783">
    <property type="entry name" value="Ig-like_fold"/>
</dbReference>
<dbReference type="InterPro" id="IPR013098">
    <property type="entry name" value="Ig_I-set"/>
</dbReference>
<dbReference type="InterPro" id="IPR003599">
    <property type="entry name" value="Ig_sub"/>
</dbReference>
<dbReference type="InterPro" id="IPR003598">
    <property type="entry name" value="Ig_sub2"/>
</dbReference>
<dbReference type="InterPro" id="IPR011009">
    <property type="entry name" value="Kinase-like_dom_sf"/>
</dbReference>
<dbReference type="PANTHER" id="PTHR47091">
    <property type="entry name" value="ALPHA-PROTEIN KINASE 2-RELATED"/>
    <property type="match status" value="1"/>
</dbReference>
<dbReference type="PANTHER" id="PTHR47091:SF1">
    <property type="entry name" value="ALPHA-PROTEIN KINASE 3"/>
    <property type="match status" value="1"/>
</dbReference>
<dbReference type="Pfam" id="PF02816">
    <property type="entry name" value="Alpha_kinase"/>
    <property type="match status" value="1"/>
</dbReference>
<dbReference type="Pfam" id="PF07679">
    <property type="entry name" value="I-set"/>
    <property type="match status" value="1"/>
</dbReference>
<dbReference type="SMART" id="SM00811">
    <property type="entry name" value="Alpha_kinase"/>
    <property type="match status" value="1"/>
</dbReference>
<dbReference type="SMART" id="SM00409">
    <property type="entry name" value="IG"/>
    <property type="match status" value="2"/>
</dbReference>
<dbReference type="SMART" id="SM00408">
    <property type="entry name" value="IGc2"/>
    <property type="match status" value="2"/>
</dbReference>
<dbReference type="SUPFAM" id="SSF48726">
    <property type="entry name" value="Immunoglobulin"/>
    <property type="match status" value="2"/>
</dbReference>
<dbReference type="SUPFAM" id="SSF56112">
    <property type="entry name" value="Protein kinase-like (PK-like)"/>
    <property type="match status" value="1"/>
</dbReference>
<dbReference type="PROSITE" id="PS51158">
    <property type="entry name" value="ALPHA_KINASE"/>
    <property type="match status" value="1"/>
</dbReference>
<dbReference type="PROSITE" id="PS50835">
    <property type="entry name" value="IG_LIKE"/>
    <property type="match status" value="2"/>
</dbReference>
<organism>
    <name type="scientific">Homo sapiens</name>
    <name type="common">Human</name>
    <dbReference type="NCBI Taxonomy" id="9606"/>
    <lineage>
        <taxon>Eukaryota</taxon>
        <taxon>Metazoa</taxon>
        <taxon>Chordata</taxon>
        <taxon>Craniata</taxon>
        <taxon>Vertebrata</taxon>
        <taxon>Euteleostomi</taxon>
        <taxon>Mammalia</taxon>
        <taxon>Eutheria</taxon>
        <taxon>Euarchontoglires</taxon>
        <taxon>Primates</taxon>
        <taxon>Haplorrhini</taxon>
        <taxon>Catarrhini</taxon>
        <taxon>Hominidae</taxon>
        <taxon>Homo</taxon>
    </lineage>
</organism>
<feature type="chain" id="PRO_0000260031" description="Alpha-protein kinase 3">
    <location>
        <begin position="1"/>
        <end position="1705"/>
    </location>
</feature>
<feature type="domain" description="Ig-like 1">
    <location>
        <begin position="77"/>
        <end position="168"/>
    </location>
</feature>
<feature type="domain" description="Ig-like 2">
    <location>
        <begin position="1274"/>
        <end position="1362"/>
    </location>
</feature>
<feature type="domain" description="Alpha-type protein kinase" evidence="4">
    <location>
        <begin position="1390"/>
        <end position="1625"/>
    </location>
</feature>
<feature type="region of interest" description="Disordered" evidence="5">
    <location>
        <begin position="1"/>
        <end position="33"/>
    </location>
</feature>
<feature type="region of interest" description="Disordered" evidence="5">
    <location>
        <begin position="211"/>
        <end position="244"/>
    </location>
</feature>
<feature type="region of interest" description="Disordered" evidence="5">
    <location>
        <begin position="308"/>
        <end position="749"/>
    </location>
</feature>
<feature type="region of interest" description="Disordered" evidence="5">
    <location>
        <begin position="792"/>
        <end position="845"/>
    </location>
</feature>
<feature type="region of interest" description="Disordered" evidence="5">
    <location>
        <begin position="1082"/>
        <end position="1145"/>
    </location>
</feature>
<feature type="region of interest" description="Disordered" evidence="5">
    <location>
        <begin position="1173"/>
        <end position="1226"/>
    </location>
</feature>
<feature type="region of interest" description="Disordered" evidence="5">
    <location>
        <begin position="1628"/>
        <end position="1705"/>
    </location>
</feature>
<feature type="compositionally biased region" description="Low complexity" evidence="5">
    <location>
        <begin position="1"/>
        <end position="10"/>
    </location>
</feature>
<feature type="compositionally biased region" description="Gly residues" evidence="5">
    <location>
        <begin position="11"/>
        <end position="21"/>
    </location>
</feature>
<feature type="compositionally biased region" description="Basic and acidic residues" evidence="5">
    <location>
        <begin position="211"/>
        <end position="221"/>
    </location>
</feature>
<feature type="compositionally biased region" description="Basic and acidic residues" evidence="5">
    <location>
        <begin position="308"/>
        <end position="342"/>
    </location>
</feature>
<feature type="compositionally biased region" description="Low complexity" evidence="5">
    <location>
        <begin position="370"/>
        <end position="382"/>
    </location>
</feature>
<feature type="compositionally biased region" description="Polar residues" evidence="5">
    <location>
        <begin position="495"/>
        <end position="504"/>
    </location>
</feature>
<feature type="compositionally biased region" description="Low complexity" evidence="5">
    <location>
        <begin position="557"/>
        <end position="579"/>
    </location>
</feature>
<feature type="compositionally biased region" description="Polar residues" evidence="5">
    <location>
        <begin position="598"/>
        <end position="609"/>
    </location>
</feature>
<feature type="compositionally biased region" description="Basic and acidic residues" evidence="5">
    <location>
        <begin position="647"/>
        <end position="657"/>
    </location>
</feature>
<feature type="compositionally biased region" description="Polar residues" evidence="5">
    <location>
        <begin position="666"/>
        <end position="676"/>
    </location>
</feature>
<feature type="compositionally biased region" description="Basic and acidic residues" evidence="5">
    <location>
        <begin position="679"/>
        <end position="700"/>
    </location>
</feature>
<feature type="compositionally biased region" description="Polar residues" evidence="5">
    <location>
        <begin position="708"/>
        <end position="729"/>
    </location>
</feature>
<feature type="compositionally biased region" description="Pro residues" evidence="5">
    <location>
        <begin position="736"/>
        <end position="745"/>
    </location>
</feature>
<feature type="compositionally biased region" description="Basic and acidic residues" evidence="5">
    <location>
        <begin position="829"/>
        <end position="844"/>
    </location>
</feature>
<feature type="compositionally biased region" description="Low complexity" evidence="5">
    <location>
        <begin position="1120"/>
        <end position="1131"/>
    </location>
</feature>
<feature type="compositionally biased region" description="Polar residues" evidence="5">
    <location>
        <begin position="1664"/>
        <end position="1696"/>
    </location>
</feature>
<feature type="modified residue" description="Phosphoserine" evidence="1">
    <location>
        <position position="228"/>
    </location>
</feature>
<feature type="modified residue" description="Phosphoserine" evidence="1">
    <location>
        <position position="1222"/>
    </location>
</feature>
<feature type="disulfide bond" evidence="3">
    <location>
        <begin position="1296"/>
        <end position="1346"/>
    </location>
</feature>
<feature type="sequence variant" id="VAR_041524" description="In dbSNP:rs34407151." evidence="8">
    <original>R</original>
    <variation>H</variation>
    <location>
        <position position="134"/>
    </location>
</feature>
<feature type="sequence variant" id="VAR_041525" description="In dbSNP:rs56015306." evidence="8">
    <original>T</original>
    <variation>I</variation>
    <location>
        <position position="136"/>
    </location>
</feature>
<feature type="sequence variant" id="VAR_028989" description="In dbSNP:rs3803403." evidence="8">
    <original>T</original>
    <variation>S</variation>
    <location>
        <position position="212"/>
    </location>
</feature>
<feature type="sequence variant" id="VAR_041526" description="In a lung large cell carcinoma sample; somatic mutation." evidence="8">
    <original>Q</original>
    <variation>E</variation>
    <location>
        <position position="231"/>
    </location>
</feature>
<feature type="sequence variant" id="VAR_028990" description="In dbSNP:rs3803405." evidence="8">
    <original>G</original>
    <variation>E</variation>
    <location>
        <position position="377"/>
    </location>
</feature>
<feature type="sequence variant" id="VAR_041527" description="In dbSNP:rs55702300." evidence="8">
    <original>Q</original>
    <variation>R</variation>
    <location>
        <position position="400"/>
    </location>
</feature>
<feature type="sequence variant" id="VAR_041528" description="In dbSNP:rs34409363." evidence="8">
    <original>G</original>
    <variation>D</variation>
    <location>
        <position position="461"/>
    </location>
</feature>
<feature type="sequence variant" id="VAR_028991" description="In dbSNP:rs16974569." evidence="8">
    <original>T</original>
    <variation>M</variation>
    <location>
        <position position="559"/>
    </location>
</feature>
<feature type="sequence variant" id="VAR_041529" description="In dbSNP:rs34906636." evidence="8">
    <original>R</original>
    <variation>L</variation>
    <location>
        <position position="634"/>
    </location>
</feature>
<feature type="sequence variant" id="VAR_041530" description="In dbSNP:rs56191073." evidence="8">
    <original>E</original>
    <variation>D</variation>
    <location>
        <position position="727"/>
    </location>
</feature>
<feature type="sequence variant" id="VAR_057743" description="In dbSNP:rs35633849.">
    <original>E</original>
    <variation>K</variation>
    <location>
        <position position="811"/>
    </location>
</feature>
<feature type="sequence variant" id="VAR_057744" description="In dbSNP:rs34173528.">
    <original>A</original>
    <variation>G</variation>
    <location>
        <position position="935"/>
    </location>
</feature>
<feature type="sequence variant" id="VAR_079142" description="In CMH27." evidence="9">
    <location>
        <begin position="1059"/>
        <end position="1705"/>
    </location>
</feature>
<feature type="sequence variant" id="VAR_079143" description="In CMH27." evidence="10">
    <location>
        <begin position="1062"/>
        <end position="1705"/>
    </location>
</feature>
<feature type="sequence variant" id="VAR_028992" description="In dbSNP:rs306197." evidence="6 7 8">
    <original>P</original>
    <variation>L</variation>
    <location>
        <position position="1097"/>
    </location>
</feature>
<feature type="sequence variant" id="VAR_041531" description="In a metastatic melanoma sample; somatic mutation." evidence="8">
    <original>G</original>
    <variation>E</variation>
    <location>
        <position position="1162"/>
    </location>
</feature>
<feature type="sequence variant" id="VAR_041532" description="In dbSNP:rs55752937." evidence="8">
    <original>R</original>
    <variation>W</variation>
    <location>
        <position position="1210"/>
    </location>
</feature>
<feature type="sequence variant" id="VAR_041533" description="In dbSNP:rs34775428." evidence="8">
    <original>A</original>
    <variation>D</variation>
    <location>
        <position position="1355"/>
    </location>
</feature>
<feature type="sequence variant" id="VAR_028993" description="In dbSNP:rs187316." evidence="8">
    <original>L</original>
    <variation>P</variation>
    <location>
        <position position="1420"/>
    </location>
</feature>
<feature type="sequence variant" id="VAR_079144" description="In CMH27." evidence="9">
    <location>
        <begin position="1563"/>
        <end position="1705"/>
    </location>
</feature>
<feature type="sequence variant" id="VAR_057745" description="In dbSNP:rs36002219.">
    <original>A</original>
    <variation>V</variation>
    <location>
        <position position="1671"/>
    </location>
</feature>
<feature type="sequence conflict" description="In Ref. 1; AAK95951." evidence="15" ref="1">
    <original>S</original>
    <variation>T</variation>
    <location>
        <position position="8"/>
    </location>
</feature>
<protein>
    <recommendedName>
        <fullName evidence="15">Alpha-protein kinase 3</fullName>
        <ecNumber evidence="2">2.7.11.1</ecNumber>
    </recommendedName>
    <alternativeName>
        <fullName evidence="13">Muscle alpha-protein kinase</fullName>
    </alternativeName>
</protein>
<comment type="function">
    <text evidence="16 17 18 19">Involved in cardiomyocyte differentiation.</text>
</comment>
<comment type="catalytic activity">
    <reaction evidence="2">
        <text>L-seryl-[protein] + ATP = O-phospho-L-seryl-[protein] + ADP + H(+)</text>
        <dbReference type="Rhea" id="RHEA:17989"/>
        <dbReference type="Rhea" id="RHEA-COMP:9863"/>
        <dbReference type="Rhea" id="RHEA-COMP:11604"/>
        <dbReference type="ChEBI" id="CHEBI:15378"/>
        <dbReference type="ChEBI" id="CHEBI:29999"/>
        <dbReference type="ChEBI" id="CHEBI:30616"/>
        <dbReference type="ChEBI" id="CHEBI:83421"/>
        <dbReference type="ChEBI" id="CHEBI:456216"/>
        <dbReference type="EC" id="2.7.11.1"/>
    </reaction>
</comment>
<comment type="catalytic activity">
    <reaction evidence="2">
        <text>L-threonyl-[protein] + ATP = O-phospho-L-threonyl-[protein] + ADP + H(+)</text>
        <dbReference type="Rhea" id="RHEA:46608"/>
        <dbReference type="Rhea" id="RHEA-COMP:11060"/>
        <dbReference type="Rhea" id="RHEA-COMP:11605"/>
        <dbReference type="ChEBI" id="CHEBI:15378"/>
        <dbReference type="ChEBI" id="CHEBI:30013"/>
        <dbReference type="ChEBI" id="CHEBI:30616"/>
        <dbReference type="ChEBI" id="CHEBI:61977"/>
        <dbReference type="ChEBI" id="CHEBI:456216"/>
        <dbReference type="EC" id="2.7.11.1"/>
    </reaction>
</comment>
<comment type="subcellular location">
    <subcellularLocation>
        <location evidence="1">Nucleus</location>
    </subcellularLocation>
</comment>
<comment type="disease" evidence="9 10 11 12">
    <disease id="DI-05290">
        <name>Cardiomyopathy, familial hypertrophic, 27</name>
        <acronym>CMH27</acronym>
        <description>A form of hypertrophic cardiomyopathy, a heart disorder characterized by ventricular hypertrophy, which is usually asymmetric and often involves the interventricular septum. The symptoms include dyspnea, syncope, collapse, palpitations, and chest pain. They can be readily provoked by exercise. The disorder has inter- and intrafamilial variability ranging from benign to malignant forms with high risk of cardiac failure and sudden cardiac death. CMH27 is a severe, early-onset form with features of hypertrophic and dilated cardiomyopathy.</description>
        <dbReference type="MIM" id="618052"/>
    </disease>
    <text>The disease is caused by variants affecting the gene represented in this entry.</text>
</comment>
<comment type="similarity">
    <text evidence="15">Belongs to the protein kinase superfamily. Alpha-type protein kinase family. ALPK subfamily.</text>
</comment>
<comment type="sequence caution" evidence="15">
    <conflict type="erroneous initiation">
        <sequence resource="EMBL-CDS" id="AAK95951"/>
    </conflict>
    <text>Extended N-terminus.</text>
</comment>
<gene>
    <name evidence="20" type="primary">ALPK3</name>
    <name evidence="14" type="synonym">KIAA1330</name>
    <name evidence="13" type="synonym">MAK</name>
</gene>